<keyword id="KW-1185">Reference proteome</keyword>
<keyword id="KW-0687">Ribonucleoprotein</keyword>
<keyword id="KW-0689">Ribosomal protein</keyword>
<keyword id="KW-0694">RNA-binding</keyword>
<keyword id="KW-0699">rRNA-binding</keyword>
<accession>Q81J26</accession>
<feature type="chain" id="PRO_0000131207" description="Large ribosomal subunit protein uL18">
    <location>
        <begin position="1"/>
        <end position="120"/>
    </location>
</feature>
<proteinExistence type="inferred from homology"/>
<reference key="1">
    <citation type="journal article" date="2003" name="Nature">
        <title>Genome sequence of Bacillus cereus and comparative analysis with Bacillus anthracis.</title>
        <authorList>
            <person name="Ivanova N."/>
            <person name="Sorokin A."/>
            <person name="Anderson I."/>
            <person name="Galleron N."/>
            <person name="Candelon B."/>
            <person name="Kapatral V."/>
            <person name="Bhattacharyya A."/>
            <person name="Reznik G."/>
            <person name="Mikhailova N."/>
            <person name="Lapidus A."/>
            <person name="Chu L."/>
            <person name="Mazur M."/>
            <person name="Goltsman E."/>
            <person name="Larsen N."/>
            <person name="D'Souza M."/>
            <person name="Walunas T."/>
            <person name="Grechkin Y."/>
            <person name="Pusch G."/>
            <person name="Haselkorn R."/>
            <person name="Fonstein M."/>
            <person name="Ehrlich S.D."/>
            <person name="Overbeek R."/>
            <person name="Kyrpides N.C."/>
        </authorList>
    </citation>
    <scope>NUCLEOTIDE SEQUENCE [LARGE SCALE GENOMIC DNA]</scope>
    <source>
        <strain>ATCC 14579 / DSM 31 / CCUG 7414 / JCM 2152 / NBRC 15305 / NCIMB 9373 / NCTC 2599 / NRRL B-3711</strain>
    </source>
</reference>
<name>RL18_BACCR</name>
<organism>
    <name type="scientific">Bacillus cereus (strain ATCC 14579 / DSM 31 / CCUG 7414 / JCM 2152 / NBRC 15305 / NCIMB 9373 / NCTC 2599 / NRRL B-3711)</name>
    <dbReference type="NCBI Taxonomy" id="226900"/>
    <lineage>
        <taxon>Bacteria</taxon>
        <taxon>Bacillati</taxon>
        <taxon>Bacillota</taxon>
        <taxon>Bacilli</taxon>
        <taxon>Bacillales</taxon>
        <taxon>Bacillaceae</taxon>
        <taxon>Bacillus</taxon>
        <taxon>Bacillus cereus group</taxon>
    </lineage>
</organism>
<evidence type="ECO:0000255" key="1">
    <source>
        <dbReference type="HAMAP-Rule" id="MF_01337"/>
    </source>
</evidence>
<evidence type="ECO:0000305" key="2"/>
<protein>
    <recommendedName>
        <fullName evidence="1">Large ribosomal subunit protein uL18</fullName>
    </recommendedName>
    <alternativeName>
        <fullName evidence="2">50S ribosomal protein L18</fullName>
    </alternativeName>
</protein>
<comment type="function">
    <text evidence="1">This is one of the proteins that bind and probably mediate the attachment of the 5S RNA into the large ribosomal subunit, where it forms part of the central protuberance.</text>
</comment>
<comment type="subunit">
    <text evidence="1">Part of the 50S ribosomal subunit; part of the 5S rRNA/L5/L18/L25 subcomplex. Contacts the 5S and 23S rRNAs.</text>
</comment>
<comment type="similarity">
    <text evidence="1">Belongs to the universal ribosomal protein uL18 family.</text>
</comment>
<sequence length="120" mass="13106">MITKADKNATRKKRHARVRAKLTGTAERPRLNVFRSNQHIYAQVIDDVNGVTLVSASTLDKDLALNGTSNIEAATKVGESVAKRAVEKGVKEVVFDRGGYLYHGRVKALAEAAREAGLQF</sequence>
<gene>
    <name evidence="1" type="primary">rplR</name>
    <name type="ordered locus">BC_0147</name>
</gene>
<dbReference type="EMBL" id="AE016877">
    <property type="protein sequence ID" value="AAP07228.1"/>
    <property type="molecule type" value="Genomic_DNA"/>
</dbReference>
<dbReference type="RefSeq" id="NP_830027.1">
    <property type="nucleotide sequence ID" value="NC_004722.1"/>
</dbReference>
<dbReference type="RefSeq" id="WP_000628816.1">
    <property type="nucleotide sequence ID" value="NZ_CP138336.1"/>
</dbReference>
<dbReference type="SMR" id="Q81J26"/>
<dbReference type="STRING" id="226900.BC_0147"/>
<dbReference type="GeneID" id="93010927"/>
<dbReference type="KEGG" id="bce:BC0147"/>
<dbReference type="PATRIC" id="fig|226900.8.peg.148"/>
<dbReference type="HOGENOM" id="CLU_098841_0_1_9"/>
<dbReference type="OrthoDB" id="9810939at2"/>
<dbReference type="PRO" id="PR:Q81J26"/>
<dbReference type="Proteomes" id="UP000001417">
    <property type="component" value="Chromosome"/>
</dbReference>
<dbReference type="GO" id="GO:0022625">
    <property type="term" value="C:cytosolic large ribosomal subunit"/>
    <property type="evidence" value="ECO:0000318"/>
    <property type="project" value="GO_Central"/>
</dbReference>
<dbReference type="GO" id="GO:0008097">
    <property type="term" value="F:5S rRNA binding"/>
    <property type="evidence" value="ECO:0000318"/>
    <property type="project" value="GO_Central"/>
</dbReference>
<dbReference type="GO" id="GO:0003735">
    <property type="term" value="F:structural constituent of ribosome"/>
    <property type="evidence" value="ECO:0007669"/>
    <property type="project" value="InterPro"/>
</dbReference>
<dbReference type="GO" id="GO:0006412">
    <property type="term" value="P:translation"/>
    <property type="evidence" value="ECO:0007669"/>
    <property type="project" value="UniProtKB-UniRule"/>
</dbReference>
<dbReference type="CDD" id="cd00432">
    <property type="entry name" value="Ribosomal_L18_L5e"/>
    <property type="match status" value="1"/>
</dbReference>
<dbReference type="FunFam" id="3.30.420.100:FF:000001">
    <property type="entry name" value="50S ribosomal protein L18"/>
    <property type="match status" value="1"/>
</dbReference>
<dbReference type="Gene3D" id="3.30.420.100">
    <property type="match status" value="1"/>
</dbReference>
<dbReference type="HAMAP" id="MF_01337_B">
    <property type="entry name" value="Ribosomal_uL18_B"/>
    <property type="match status" value="1"/>
</dbReference>
<dbReference type="InterPro" id="IPR004389">
    <property type="entry name" value="Ribosomal_uL18_bac-type"/>
</dbReference>
<dbReference type="InterPro" id="IPR005484">
    <property type="entry name" value="Ribosomal_uL18_bac/euk"/>
</dbReference>
<dbReference type="NCBIfam" id="TIGR00060">
    <property type="entry name" value="L18_bact"/>
    <property type="match status" value="1"/>
</dbReference>
<dbReference type="PANTHER" id="PTHR12899">
    <property type="entry name" value="39S RIBOSOMAL PROTEIN L18, MITOCHONDRIAL"/>
    <property type="match status" value="1"/>
</dbReference>
<dbReference type="PANTHER" id="PTHR12899:SF3">
    <property type="entry name" value="LARGE RIBOSOMAL SUBUNIT PROTEIN UL18M"/>
    <property type="match status" value="1"/>
</dbReference>
<dbReference type="Pfam" id="PF00861">
    <property type="entry name" value="Ribosomal_L18p"/>
    <property type="match status" value="1"/>
</dbReference>
<dbReference type="SUPFAM" id="SSF53137">
    <property type="entry name" value="Translational machinery components"/>
    <property type="match status" value="1"/>
</dbReference>